<sequence>MESVTTTIQCMGIKDSCNKKKIFQGGKSKIIEFQVKYENSDEVLNFQTTQSAINKLISELKKEIYSINLPISNYSVTSSSALQDINLLCQCISSTPKIQRSLSFVNFIETENNLTVSSTFIFDFIKNSDISGVLLKTKNNNKRTKKERLCVIKYSRVLYYFSETGGGSSTDINSTEVKKKRCKGLKFLDDCKITEKGENYFQLKTSNNETYVFTTPTNDECDRWVTTINNCIDYITKSTYRVSGQVQGTVVKSRNLAAKDLNGKSDPFVIIKAEQQQHRTQTIYKSLNPQFNEAFHFDITKHQGYVYFFVWDEDKFKTADFMGEVAVPLSLLPPNGSEISLWLPLSPRNSKDKVSGDILIKIRYFFSPDQIEVSPTSIYGNSLEAIVKNRPEICKNQVPNILYQFIEFFEQHLNEEGLFRICGNSTEIKFIKNQVNTDTQITFNPSSVHAYAGAFKLFFRELPEPLFTFNQYDNLINLAKKSTELQPLIEIIKTFPICHLNVLKLLLPFFGKIAANSKSNLMNHSNLSIVFGPSFLRVKDESHVNLMEMILVNDIAKFVFENSQQILKSI</sequence>
<proteinExistence type="inferred from homology"/>
<feature type="chain" id="PRO_0000380198" description="Rho GTPase-activating protein gacEE">
    <location>
        <begin position="1"/>
        <end position="570"/>
    </location>
</feature>
<feature type="domain" description="PH" evidence="3">
    <location>
        <begin position="127"/>
        <end position="233"/>
    </location>
</feature>
<feature type="domain" description="C2" evidence="2">
    <location>
        <begin position="224"/>
        <end position="343"/>
    </location>
</feature>
<feature type="domain" description="Rho-GAP" evidence="4">
    <location>
        <begin position="381"/>
        <end position="567"/>
    </location>
</feature>
<feature type="binding site" evidence="2">
    <location>
        <position position="260"/>
    </location>
    <ligand>
        <name>Ca(2+)</name>
        <dbReference type="ChEBI" id="CHEBI:29108"/>
        <label>1</label>
    </ligand>
</feature>
<feature type="binding site" evidence="2">
    <location>
        <position position="260"/>
    </location>
    <ligand>
        <name>Ca(2+)</name>
        <dbReference type="ChEBI" id="CHEBI:29108"/>
        <label>2</label>
    </ligand>
</feature>
<feature type="binding site" evidence="2">
    <location>
        <position position="266"/>
    </location>
    <ligand>
        <name>Ca(2+)</name>
        <dbReference type="ChEBI" id="CHEBI:29108"/>
        <label>1</label>
    </ligand>
</feature>
<feature type="binding site" evidence="2">
    <location>
        <position position="312"/>
    </location>
    <ligand>
        <name>Ca(2+)</name>
        <dbReference type="ChEBI" id="CHEBI:29108"/>
        <label>1</label>
    </ligand>
</feature>
<feature type="binding site" evidence="2">
    <location>
        <position position="312"/>
    </location>
    <ligand>
        <name>Ca(2+)</name>
        <dbReference type="ChEBI" id="CHEBI:29108"/>
        <label>2</label>
    </ligand>
</feature>
<feature type="binding site" evidence="2">
    <location>
        <position position="314"/>
    </location>
    <ligand>
        <name>Ca(2+)</name>
        <dbReference type="ChEBI" id="CHEBI:29108"/>
        <label>1</label>
    </ligand>
</feature>
<feature type="binding site" evidence="2">
    <location>
        <position position="314"/>
    </location>
    <ligand>
        <name>Ca(2+)</name>
        <dbReference type="ChEBI" id="CHEBI:29108"/>
        <label>2</label>
    </ligand>
</feature>
<feature type="binding site" evidence="2">
    <location>
        <position position="320"/>
    </location>
    <ligand>
        <name>Ca(2+)</name>
        <dbReference type="ChEBI" id="CHEBI:29108"/>
        <label>2</label>
    </ligand>
</feature>
<feature type="site" description="Arginine finger; crucial for GTP hydrolysis by stabilizing the transition state" evidence="4">
    <location>
        <position position="420"/>
    </location>
</feature>
<comment type="function">
    <text evidence="1">Rho GTPase-activating protein involved in the signal transduction pathway.</text>
</comment>
<comment type="cofactor">
    <cofactor evidence="2">
        <name>Ca(2+)</name>
        <dbReference type="ChEBI" id="CHEBI:29108"/>
    </cofactor>
</comment>
<comment type="subcellular location">
    <subcellularLocation>
        <location evidence="1">Cytoplasm</location>
    </subcellularLocation>
</comment>
<comment type="sequence caution" evidence="5">
    <conflict type="erroneous gene model prediction">
        <sequence resource="EMBL-CDS" id="EAL61541"/>
    </conflict>
</comment>
<accession>Q54E35</accession>
<gene>
    <name type="primary">gacEE</name>
    <name type="ORF">DDB_G0291840</name>
</gene>
<reference key="1">
    <citation type="journal article" date="2005" name="Nature">
        <title>The genome of the social amoeba Dictyostelium discoideum.</title>
        <authorList>
            <person name="Eichinger L."/>
            <person name="Pachebat J.A."/>
            <person name="Gloeckner G."/>
            <person name="Rajandream M.A."/>
            <person name="Sucgang R."/>
            <person name="Berriman M."/>
            <person name="Song J."/>
            <person name="Olsen R."/>
            <person name="Szafranski K."/>
            <person name="Xu Q."/>
            <person name="Tunggal B."/>
            <person name="Kummerfeld S."/>
            <person name="Madera M."/>
            <person name="Konfortov B.A."/>
            <person name="Rivero F."/>
            <person name="Bankier A.T."/>
            <person name="Lehmann R."/>
            <person name="Hamlin N."/>
            <person name="Davies R."/>
            <person name="Gaudet P."/>
            <person name="Fey P."/>
            <person name="Pilcher K."/>
            <person name="Chen G."/>
            <person name="Saunders D."/>
            <person name="Sodergren E.J."/>
            <person name="Davis P."/>
            <person name="Kerhornou A."/>
            <person name="Nie X."/>
            <person name="Hall N."/>
            <person name="Anjard C."/>
            <person name="Hemphill L."/>
            <person name="Bason N."/>
            <person name="Farbrother P."/>
            <person name="Desany B."/>
            <person name="Just E."/>
            <person name="Morio T."/>
            <person name="Rost R."/>
            <person name="Churcher C.M."/>
            <person name="Cooper J."/>
            <person name="Haydock S."/>
            <person name="van Driessche N."/>
            <person name="Cronin A."/>
            <person name="Goodhead I."/>
            <person name="Muzny D.M."/>
            <person name="Mourier T."/>
            <person name="Pain A."/>
            <person name="Lu M."/>
            <person name="Harper D."/>
            <person name="Lindsay R."/>
            <person name="Hauser H."/>
            <person name="James K.D."/>
            <person name="Quiles M."/>
            <person name="Madan Babu M."/>
            <person name="Saito T."/>
            <person name="Buchrieser C."/>
            <person name="Wardroper A."/>
            <person name="Felder M."/>
            <person name="Thangavelu M."/>
            <person name="Johnson D."/>
            <person name="Knights A."/>
            <person name="Loulseged H."/>
            <person name="Mungall K.L."/>
            <person name="Oliver K."/>
            <person name="Price C."/>
            <person name="Quail M.A."/>
            <person name="Urushihara H."/>
            <person name="Hernandez J."/>
            <person name="Rabbinowitsch E."/>
            <person name="Steffen D."/>
            <person name="Sanders M."/>
            <person name="Ma J."/>
            <person name="Kohara Y."/>
            <person name="Sharp S."/>
            <person name="Simmonds M.N."/>
            <person name="Spiegler S."/>
            <person name="Tivey A."/>
            <person name="Sugano S."/>
            <person name="White B."/>
            <person name="Walker D."/>
            <person name="Woodward J.R."/>
            <person name="Winckler T."/>
            <person name="Tanaka Y."/>
            <person name="Shaulsky G."/>
            <person name="Schleicher M."/>
            <person name="Weinstock G.M."/>
            <person name="Rosenthal A."/>
            <person name="Cox E.C."/>
            <person name="Chisholm R.L."/>
            <person name="Gibbs R.A."/>
            <person name="Loomis W.F."/>
            <person name="Platzer M."/>
            <person name="Kay R.R."/>
            <person name="Williams J.G."/>
            <person name="Dear P.H."/>
            <person name="Noegel A.A."/>
            <person name="Barrell B.G."/>
            <person name="Kuspa A."/>
        </authorList>
    </citation>
    <scope>NUCLEOTIDE SEQUENCE [LARGE SCALE GENOMIC DNA]</scope>
    <source>
        <strain>AX4</strain>
    </source>
</reference>
<protein>
    <recommendedName>
        <fullName>Rho GTPase-activating protein gacEE</fullName>
    </recommendedName>
    <alternativeName>
        <fullName>GTPase activating factor for raC protein EE</fullName>
    </alternativeName>
</protein>
<evidence type="ECO:0000250" key="1"/>
<evidence type="ECO:0000255" key="2">
    <source>
        <dbReference type="PROSITE-ProRule" id="PRU00041"/>
    </source>
</evidence>
<evidence type="ECO:0000255" key="3">
    <source>
        <dbReference type="PROSITE-ProRule" id="PRU00145"/>
    </source>
</evidence>
<evidence type="ECO:0000255" key="4">
    <source>
        <dbReference type="PROSITE-ProRule" id="PRU00172"/>
    </source>
</evidence>
<evidence type="ECO:0000305" key="5"/>
<organism>
    <name type="scientific">Dictyostelium discoideum</name>
    <name type="common">Social amoeba</name>
    <dbReference type="NCBI Taxonomy" id="44689"/>
    <lineage>
        <taxon>Eukaryota</taxon>
        <taxon>Amoebozoa</taxon>
        <taxon>Evosea</taxon>
        <taxon>Eumycetozoa</taxon>
        <taxon>Dictyostelia</taxon>
        <taxon>Dictyosteliales</taxon>
        <taxon>Dictyosteliaceae</taxon>
        <taxon>Dictyostelium</taxon>
    </lineage>
</organism>
<name>GACEE_DICDI</name>
<keyword id="KW-0106">Calcium</keyword>
<keyword id="KW-0963">Cytoplasm</keyword>
<keyword id="KW-0343">GTPase activation</keyword>
<keyword id="KW-0479">Metal-binding</keyword>
<keyword id="KW-1185">Reference proteome</keyword>
<dbReference type="EMBL" id="AAFI02000185">
    <property type="protein sequence ID" value="EAL61541.1"/>
    <property type="status" value="ALT_SEQ"/>
    <property type="molecule type" value="Genomic_DNA"/>
</dbReference>
<dbReference type="RefSeq" id="XP_629952.1">
    <property type="nucleotide sequence ID" value="XM_629950.1"/>
</dbReference>
<dbReference type="SMR" id="Q54E35"/>
<dbReference type="FunCoup" id="Q54E35">
    <property type="interactions" value="111"/>
</dbReference>
<dbReference type="STRING" id="44689.Q54E35"/>
<dbReference type="PaxDb" id="44689-DDB0233786"/>
<dbReference type="EnsemblProtists" id="EAL61541">
    <property type="protein sequence ID" value="EAL61541"/>
    <property type="gene ID" value="DDB_G0291840"/>
</dbReference>
<dbReference type="GeneID" id="8628358"/>
<dbReference type="KEGG" id="ddi:DDB_G0291840"/>
<dbReference type="dictyBase" id="DDB_G0291840">
    <property type="gene designation" value="gacEE"/>
</dbReference>
<dbReference type="VEuPathDB" id="AmoebaDB:DDB_G0291840"/>
<dbReference type="eggNOG" id="KOG1032">
    <property type="taxonomic scope" value="Eukaryota"/>
</dbReference>
<dbReference type="eggNOG" id="KOG4270">
    <property type="taxonomic scope" value="Eukaryota"/>
</dbReference>
<dbReference type="InParanoid" id="Q54E35"/>
<dbReference type="Reactome" id="R-DDI-9013148">
    <property type="pathway name" value="CDC42 GTPase cycle"/>
</dbReference>
<dbReference type="Reactome" id="R-DDI-9013149">
    <property type="pathway name" value="RAC1 GTPase cycle"/>
</dbReference>
<dbReference type="Reactome" id="R-DDI-9013423">
    <property type="pathway name" value="RAC3 GTPase cycle"/>
</dbReference>
<dbReference type="Reactome" id="R-DDI-9013424">
    <property type="pathway name" value="RHOV GTPase cycle"/>
</dbReference>
<dbReference type="PRO" id="PR:Q54E35"/>
<dbReference type="Proteomes" id="UP000002195">
    <property type="component" value="Chromosome 6"/>
</dbReference>
<dbReference type="GO" id="GO:0005737">
    <property type="term" value="C:cytoplasm"/>
    <property type="evidence" value="ECO:0000318"/>
    <property type="project" value="GO_Central"/>
</dbReference>
<dbReference type="GO" id="GO:0005886">
    <property type="term" value="C:plasma membrane"/>
    <property type="evidence" value="ECO:0000318"/>
    <property type="project" value="GO_Central"/>
</dbReference>
<dbReference type="GO" id="GO:0005096">
    <property type="term" value="F:GTPase activator activity"/>
    <property type="evidence" value="ECO:0000318"/>
    <property type="project" value="GO_Central"/>
</dbReference>
<dbReference type="GO" id="GO:0046872">
    <property type="term" value="F:metal ion binding"/>
    <property type="evidence" value="ECO:0007669"/>
    <property type="project" value="UniProtKB-KW"/>
</dbReference>
<dbReference type="GO" id="GO:0007264">
    <property type="term" value="P:small GTPase-mediated signal transduction"/>
    <property type="evidence" value="ECO:0000318"/>
    <property type="project" value="GO_Central"/>
</dbReference>
<dbReference type="CDD" id="cd00030">
    <property type="entry name" value="C2"/>
    <property type="match status" value="1"/>
</dbReference>
<dbReference type="CDD" id="cd00821">
    <property type="entry name" value="PH"/>
    <property type="match status" value="1"/>
</dbReference>
<dbReference type="CDD" id="cd00159">
    <property type="entry name" value="RhoGAP"/>
    <property type="match status" value="1"/>
</dbReference>
<dbReference type="FunFam" id="2.30.29.30:FF:000916">
    <property type="entry name" value="Rho GTPase-activating protein gacEE"/>
    <property type="match status" value="1"/>
</dbReference>
<dbReference type="FunFam" id="2.60.40.150:FF:000521">
    <property type="entry name" value="Rho GTPase-activating protein gacEE"/>
    <property type="match status" value="1"/>
</dbReference>
<dbReference type="Gene3D" id="2.60.40.150">
    <property type="entry name" value="C2 domain"/>
    <property type="match status" value="1"/>
</dbReference>
<dbReference type="Gene3D" id="2.30.29.30">
    <property type="entry name" value="Pleckstrin-homology domain (PH domain)/Phosphotyrosine-binding domain (PTB)"/>
    <property type="match status" value="1"/>
</dbReference>
<dbReference type="Gene3D" id="1.10.555.10">
    <property type="entry name" value="Rho GTPase activation protein"/>
    <property type="match status" value="1"/>
</dbReference>
<dbReference type="InterPro" id="IPR000008">
    <property type="entry name" value="C2_dom"/>
</dbReference>
<dbReference type="InterPro" id="IPR035892">
    <property type="entry name" value="C2_domain_sf"/>
</dbReference>
<dbReference type="InterPro" id="IPR011993">
    <property type="entry name" value="PH-like_dom_sf"/>
</dbReference>
<dbReference type="InterPro" id="IPR001849">
    <property type="entry name" value="PH_domain"/>
</dbReference>
<dbReference type="InterPro" id="IPR050729">
    <property type="entry name" value="Rho-GAP"/>
</dbReference>
<dbReference type="InterPro" id="IPR008936">
    <property type="entry name" value="Rho_GTPase_activation_prot"/>
</dbReference>
<dbReference type="InterPro" id="IPR000198">
    <property type="entry name" value="RhoGAP_dom"/>
</dbReference>
<dbReference type="PANTHER" id="PTHR23176:SF130">
    <property type="entry name" value="RHO GTPASE-ACTIVATING PROTEIN GACEE"/>
    <property type="match status" value="1"/>
</dbReference>
<dbReference type="PANTHER" id="PTHR23176">
    <property type="entry name" value="RHO/RAC/CDC GTPASE-ACTIVATING PROTEIN"/>
    <property type="match status" value="1"/>
</dbReference>
<dbReference type="Pfam" id="PF00168">
    <property type="entry name" value="C2"/>
    <property type="match status" value="1"/>
</dbReference>
<dbReference type="Pfam" id="PF00169">
    <property type="entry name" value="PH"/>
    <property type="match status" value="1"/>
</dbReference>
<dbReference type="Pfam" id="PF00620">
    <property type="entry name" value="RhoGAP"/>
    <property type="match status" value="1"/>
</dbReference>
<dbReference type="PRINTS" id="PR00360">
    <property type="entry name" value="C2DOMAIN"/>
</dbReference>
<dbReference type="SMART" id="SM00239">
    <property type="entry name" value="C2"/>
    <property type="match status" value="1"/>
</dbReference>
<dbReference type="SMART" id="SM00233">
    <property type="entry name" value="PH"/>
    <property type="match status" value="1"/>
</dbReference>
<dbReference type="SMART" id="SM00324">
    <property type="entry name" value="RhoGAP"/>
    <property type="match status" value="1"/>
</dbReference>
<dbReference type="SUPFAM" id="SSF49562">
    <property type="entry name" value="C2 domain (Calcium/lipid-binding domain, CaLB)"/>
    <property type="match status" value="1"/>
</dbReference>
<dbReference type="SUPFAM" id="SSF48350">
    <property type="entry name" value="GTPase activation domain, GAP"/>
    <property type="match status" value="1"/>
</dbReference>
<dbReference type="SUPFAM" id="SSF50729">
    <property type="entry name" value="PH domain-like"/>
    <property type="match status" value="1"/>
</dbReference>
<dbReference type="PROSITE" id="PS50004">
    <property type="entry name" value="C2"/>
    <property type="match status" value="1"/>
</dbReference>
<dbReference type="PROSITE" id="PS50003">
    <property type="entry name" value="PH_DOMAIN"/>
    <property type="match status" value="1"/>
</dbReference>
<dbReference type="PROSITE" id="PS50238">
    <property type="entry name" value="RHOGAP"/>
    <property type="match status" value="1"/>
</dbReference>